<proteinExistence type="evidence at transcript level"/>
<dbReference type="EMBL" id="AF220200">
    <property type="protein sequence ID" value="AAF27917.1"/>
    <property type="molecule type" value="mRNA"/>
</dbReference>
<dbReference type="SMR" id="Q9M612"/>
<dbReference type="GO" id="GO:0005854">
    <property type="term" value="C:nascent polypeptide-associated complex"/>
    <property type="evidence" value="ECO:0007669"/>
    <property type="project" value="InterPro"/>
</dbReference>
<dbReference type="GO" id="GO:0015031">
    <property type="term" value="P:protein transport"/>
    <property type="evidence" value="ECO:0007669"/>
    <property type="project" value="UniProtKB-KW"/>
</dbReference>
<dbReference type="CDD" id="cd22054">
    <property type="entry name" value="NAC_NACA"/>
    <property type="match status" value="1"/>
</dbReference>
<dbReference type="CDD" id="cd14358">
    <property type="entry name" value="UBA_NAC_euk"/>
    <property type="match status" value="1"/>
</dbReference>
<dbReference type="FunFam" id="2.20.70.30:FF:000002">
    <property type="entry name" value="Nascent polypeptide-associated complex (NAC), alpha subunit"/>
    <property type="match status" value="1"/>
</dbReference>
<dbReference type="FunFam" id="1.10.8.10:FF:000006">
    <property type="entry name" value="Putative nascent polypeptide-associated complex subunit alpha"/>
    <property type="match status" value="1"/>
</dbReference>
<dbReference type="Gene3D" id="1.10.8.10">
    <property type="entry name" value="DNA helicase RuvA subunit, C-terminal domain"/>
    <property type="match status" value="1"/>
</dbReference>
<dbReference type="Gene3D" id="2.20.70.30">
    <property type="entry name" value="Nascent polypeptide-associated complex domain"/>
    <property type="match status" value="1"/>
</dbReference>
<dbReference type="InterPro" id="IPR016641">
    <property type="entry name" value="EGD2/NACA0like"/>
</dbReference>
<dbReference type="InterPro" id="IPR044034">
    <property type="entry name" value="NAC-like_UBA"/>
</dbReference>
<dbReference type="InterPro" id="IPR038187">
    <property type="entry name" value="NAC_A/B_dom_sf"/>
</dbReference>
<dbReference type="InterPro" id="IPR002715">
    <property type="entry name" value="Nas_poly-pep-assoc_cplx_dom"/>
</dbReference>
<dbReference type="PANTHER" id="PTHR21713">
    <property type="entry name" value="NASCENT POLYPEPTIDE ASSOCIATED COMPLEX ALPHA SUBUNIT-RELATED"/>
    <property type="match status" value="1"/>
</dbReference>
<dbReference type="Pfam" id="PF01849">
    <property type="entry name" value="NAC"/>
    <property type="match status" value="1"/>
</dbReference>
<dbReference type="Pfam" id="PF19026">
    <property type="entry name" value="UBA_HYPK"/>
    <property type="match status" value="1"/>
</dbReference>
<dbReference type="SMART" id="SM01407">
    <property type="entry name" value="NAC"/>
    <property type="match status" value="1"/>
</dbReference>
<dbReference type="PROSITE" id="PS51151">
    <property type="entry name" value="NAC_AB"/>
    <property type="match status" value="1"/>
</dbReference>
<feature type="chain" id="PRO_0000135592" description="Nascent polypeptide-associated complex subunit alpha-like protein">
    <location>
        <begin position="1"/>
        <end position="205"/>
    </location>
</feature>
<feature type="domain" description="NAC-A/B" evidence="2">
    <location>
        <begin position="63"/>
        <end position="128"/>
    </location>
</feature>
<feature type="domain" description="UBA">
    <location>
        <begin position="166"/>
        <end position="203"/>
    </location>
</feature>
<feature type="region of interest" description="Disordered" evidence="3">
    <location>
        <begin position="1"/>
        <end position="73"/>
    </location>
</feature>
<feature type="region of interest" description="Disordered" evidence="3">
    <location>
        <begin position="137"/>
        <end position="166"/>
    </location>
</feature>
<feature type="compositionally biased region" description="Basic and acidic residues" evidence="3">
    <location>
        <begin position="20"/>
        <end position="29"/>
    </location>
</feature>
<feature type="compositionally biased region" description="Acidic residues" evidence="3">
    <location>
        <begin position="30"/>
        <end position="51"/>
    </location>
</feature>
<feature type="compositionally biased region" description="Basic and acidic residues" evidence="3">
    <location>
        <begin position="56"/>
        <end position="66"/>
    </location>
</feature>
<feature type="compositionally biased region" description="Acidic residues" evidence="3">
    <location>
        <begin position="155"/>
        <end position="165"/>
    </location>
</feature>
<name>NACA_PINTA</name>
<sequence length="205" mass="22409">MPSVSELTKEEEETLAAKLEQQELEHSDEPILEDDEDDDDEEDDNDEDDAQGEQGGEGKSKQSRSEKKCRKAMLKLGMKPVSGVSRVTIKKSKNILFVISNPDVFKSPTSDTYIAFGEAKIEDLSSQLQTQAAEQFKAPNLSHVTMKPESSTAAQEDEDEVDDTGVEPKDIELVMTQAGVSRTKAVKALKAADGDIVSAIMDLTT</sequence>
<accession>Q9M612</accession>
<keyword id="KW-0653">Protein transport</keyword>
<keyword id="KW-0813">Transport</keyword>
<evidence type="ECO:0000250" key="1"/>
<evidence type="ECO:0000255" key="2">
    <source>
        <dbReference type="PROSITE-ProRule" id="PRU00507"/>
    </source>
</evidence>
<evidence type="ECO:0000256" key="3">
    <source>
        <dbReference type="SAM" id="MobiDB-lite"/>
    </source>
</evidence>
<evidence type="ECO:0000305" key="4"/>
<protein>
    <recommendedName>
        <fullName>Nascent polypeptide-associated complex subunit alpha-like protein</fullName>
        <shortName>NAC-alpha-like protein</shortName>
    </recommendedName>
    <alternativeName>
        <fullName>Alpha-NAC-like protein</fullName>
    </alternativeName>
</protein>
<organism>
    <name type="scientific">Pinus taeda</name>
    <name type="common">Loblolly pine</name>
    <dbReference type="NCBI Taxonomy" id="3352"/>
    <lineage>
        <taxon>Eukaryota</taxon>
        <taxon>Viridiplantae</taxon>
        <taxon>Streptophyta</taxon>
        <taxon>Embryophyta</taxon>
        <taxon>Tracheophyta</taxon>
        <taxon>Spermatophyta</taxon>
        <taxon>Pinopsida</taxon>
        <taxon>Pinidae</taxon>
        <taxon>Conifers I</taxon>
        <taxon>Pinales</taxon>
        <taxon>Pinaceae</taxon>
        <taxon>Pinus</taxon>
        <taxon>Pinus subgen. Pinus</taxon>
    </lineage>
</organism>
<comment type="function">
    <text evidence="1">May promote appropriate targeting of ribosome-nascent polypeptide complexes.</text>
</comment>
<comment type="similarity">
    <text evidence="4">Belongs to the NAC-alpha family.</text>
</comment>
<reference key="1">
    <citation type="submission" date="1999-12" db="EMBL/GenBank/DDBJ databases">
        <title>Nucleotide sequence of a cDNA encoding a putative alpha NAC protein from loblolly pine somatic embryos.</title>
        <authorList>
            <person name="Destefano-Beltran L.J.C."/>
            <person name="Casas-Mollano A."/>
            <person name="Cairney J."/>
        </authorList>
    </citation>
    <scope>NUCLEOTIDE SEQUENCE [MRNA]</scope>
    <source>
        <tissue>Somatic embryo</tissue>
    </source>
</reference>